<reference key="1">
    <citation type="journal article" date="2002" name="Mol. Biol. Evol.">
        <title>The plastid chromosome of Atropa belladonna and its comparison with that of Nicotiana tabacum: the role of RNA editing in generating divergence in the process of plant speciation.</title>
        <authorList>
            <person name="Schmitz-Linneweber C."/>
            <person name="Regel R."/>
            <person name="Du T.G."/>
            <person name="Hupfer H."/>
            <person name="Herrmann R.G."/>
            <person name="Maier R.M."/>
        </authorList>
    </citation>
    <scope>NUCLEOTIDE SEQUENCE [LARGE SCALE GENOMIC DNA]</scope>
    <source>
        <strain>cv. Ab5p(kan)</strain>
    </source>
</reference>
<geneLocation type="chloroplast"/>
<organism>
    <name type="scientific">Atropa belladonna</name>
    <name type="common">Belladonna</name>
    <name type="synonym">Deadly nightshade</name>
    <dbReference type="NCBI Taxonomy" id="33113"/>
    <lineage>
        <taxon>Eukaryota</taxon>
        <taxon>Viridiplantae</taxon>
        <taxon>Streptophyta</taxon>
        <taxon>Embryophyta</taxon>
        <taxon>Tracheophyta</taxon>
        <taxon>Spermatophyta</taxon>
        <taxon>Magnoliopsida</taxon>
        <taxon>eudicotyledons</taxon>
        <taxon>Gunneridae</taxon>
        <taxon>Pentapetalae</taxon>
        <taxon>asterids</taxon>
        <taxon>lamiids</taxon>
        <taxon>Solanales</taxon>
        <taxon>Solanaceae</taxon>
        <taxon>Solanoideae</taxon>
        <taxon>Hyoscyameae</taxon>
        <taxon>Atropa</taxon>
    </lineage>
</organism>
<sequence length="509" mass="60096">MEEIQRYLQPDSSQQHNFLYPLIFQEYIYALAHDHGLNINRSILLENPGYNNQFSLLIVKRLITRMYQQNHFLISTNDSNKNTFLGCNKSLYSQMISEGFAFIVEIPFSLRLISSLSSFEGKKILKSHNLRSIHSTFPFLEDNFSHLNYVLDILIPYPVHLEILVQTLRYWVKDASSLHLLRFFLHEYWNLNSLITSKKPGYSFSKKNKRFFFFLYNSYVYECESTFVFLRNQSSHLRPTSFGALLERIYFYGKIERLVEVFAKDLQVTLWLFKDPFMHYVRYQGKSILASKGTFLLINKWKFYLVNFWQCHFSLCFHTGRIHINQLSNHSRDFMGYLSSVRLNPSMVRSQMLENSFIINNAIKKFDTLVPIIPLIGSLAKENFCTVLGHPISKPVWSDLSDSDIIDRFGRICRNLFHYYSGSSKKKTLYRIKYILRLSCARTLARKHKSTVRTFLKRSGSELLEEFLTSEEQVLSLTFPRASSSLWGVYRSRIWYLDIFCINDLANYQ</sequence>
<name>MATK_ATRBE</name>
<accession>Q8S8Y6</accession>
<protein>
    <recommendedName>
        <fullName evidence="1">Maturase K</fullName>
    </recommendedName>
    <alternativeName>
        <fullName evidence="1">Intron maturase</fullName>
    </alternativeName>
</protein>
<keyword id="KW-0150">Chloroplast</keyword>
<keyword id="KW-0507">mRNA processing</keyword>
<keyword id="KW-0934">Plastid</keyword>
<keyword id="KW-0694">RNA-binding</keyword>
<keyword id="KW-0819">tRNA processing</keyword>
<dbReference type="EMBL" id="AJ316582">
    <property type="protein sequence ID" value="CAC88025.1"/>
    <property type="molecule type" value="Genomic_DNA"/>
</dbReference>
<dbReference type="RefSeq" id="NP_783213.1">
    <property type="nucleotide sequence ID" value="NC_004561.1"/>
</dbReference>
<dbReference type="GeneID" id="806512"/>
<dbReference type="GO" id="GO:0009507">
    <property type="term" value="C:chloroplast"/>
    <property type="evidence" value="ECO:0007669"/>
    <property type="project" value="UniProtKB-SubCell"/>
</dbReference>
<dbReference type="GO" id="GO:0003723">
    <property type="term" value="F:RNA binding"/>
    <property type="evidence" value="ECO:0007669"/>
    <property type="project" value="UniProtKB-KW"/>
</dbReference>
<dbReference type="GO" id="GO:0006397">
    <property type="term" value="P:mRNA processing"/>
    <property type="evidence" value="ECO:0007669"/>
    <property type="project" value="UniProtKB-KW"/>
</dbReference>
<dbReference type="GO" id="GO:0008380">
    <property type="term" value="P:RNA splicing"/>
    <property type="evidence" value="ECO:0007669"/>
    <property type="project" value="UniProtKB-UniRule"/>
</dbReference>
<dbReference type="GO" id="GO:0008033">
    <property type="term" value="P:tRNA processing"/>
    <property type="evidence" value="ECO:0007669"/>
    <property type="project" value="UniProtKB-KW"/>
</dbReference>
<dbReference type="HAMAP" id="MF_01390">
    <property type="entry name" value="MatK"/>
    <property type="match status" value="1"/>
</dbReference>
<dbReference type="InterPro" id="IPR024937">
    <property type="entry name" value="Domain_X"/>
</dbReference>
<dbReference type="InterPro" id="IPR002866">
    <property type="entry name" value="Maturase_MatK"/>
</dbReference>
<dbReference type="InterPro" id="IPR024942">
    <property type="entry name" value="Maturase_MatK_N"/>
</dbReference>
<dbReference type="PANTHER" id="PTHR34811">
    <property type="entry name" value="MATURASE K"/>
    <property type="match status" value="1"/>
</dbReference>
<dbReference type="PANTHER" id="PTHR34811:SF1">
    <property type="entry name" value="MATURASE K"/>
    <property type="match status" value="1"/>
</dbReference>
<dbReference type="Pfam" id="PF01348">
    <property type="entry name" value="Intron_maturas2"/>
    <property type="match status" value="1"/>
</dbReference>
<dbReference type="Pfam" id="PF01824">
    <property type="entry name" value="MatK_N"/>
    <property type="match status" value="1"/>
</dbReference>
<feature type="chain" id="PRO_0000143266" description="Maturase K">
    <location>
        <begin position="1"/>
        <end position="509"/>
    </location>
</feature>
<gene>
    <name evidence="1" type="primary">matK</name>
</gene>
<proteinExistence type="inferred from homology"/>
<evidence type="ECO:0000255" key="1">
    <source>
        <dbReference type="HAMAP-Rule" id="MF_01390"/>
    </source>
</evidence>
<comment type="function">
    <text evidence="1">Usually encoded in the trnK tRNA gene intron. Probably assists in splicing its own and other chloroplast group II introns.</text>
</comment>
<comment type="subcellular location">
    <subcellularLocation>
        <location>Plastid</location>
        <location>Chloroplast</location>
    </subcellularLocation>
</comment>
<comment type="similarity">
    <text evidence="1">Belongs to the intron maturase 2 family. MatK subfamily.</text>
</comment>